<organism>
    <name type="scientific">Oryctolagus cuniculus</name>
    <name type="common">Rabbit</name>
    <dbReference type="NCBI Taxonomy" id="9986"/>
    <lineage>
        <taxon>Eukaryota</taxon>
        <taxon>Metazoa</taxon>
        <taxon>Chordata</taxon>
        <taxon>Craniata</taxon>
        <taxon>Vertebrata</taxon>
        <taxon>Euteleostomi</taxon>
        <taxon>Mammalia</taxon>
        <taxon>Eutheria</taxon>
        <taxon>Euarchontoglires</taxon>
        <taxon>Glires</taxon>
        <taxon>Lagomorpha</taxon>
        <taxon>Leporidae</taxon>
        <taxon>Oryctolagus</taxon>
    </lineage>
</organism>
<evidence type="ECO:0000250" key="1"/>
<evidence type="ECO:0000250" key="2">
    <source>
        <dbReference type="UniProtKB" id="P30086"/>
    </source>
</evidence>
<evidence type="ECO:0000250" key="3">
    <source>
        <dbReference type="UniProtKB" id="P31044"/>
    </source>
</evidence>
<evidence type="ECO:0000305" key="4"/>
<proteinExistence type="evidence at transcript level"/>
<keyword id="KW-0067">ATP-binding</keyword>
<keyword id="KW-0963">Cytoplasm</keyword>
<keyword id="KW-1015">Disulfide bond</keyword>
<keyword id="KW-0446">Lipid-binding</keyword>
<keyword id="KW-0547">Nucleotide-binding</keyword>
<keyword id="KW-0597">Phosphoprotein</keyword>
<keyword id="KW-0646">Protease inhibitor</keyword>
<keyword id="KW-1185">Reference proteome</keyword>
<keyword id="KW-0722">Serine protease inhibitor</keyword>
<reference key="1">
    <citation type="submission" date="2002-04" db="EMBL/GenBank/DDBJ databases">
        <title>Activity-dependent expression of phosphatidylethanolamine-binding protein (PEBP) in rabbit cerebellum by optokinetic stimulation.</title>
        <authorList>
            <person name="Qian Z."/>
            <person name="Barmack N.H."/>
        </authorList>
    </citation>
    <scope>NUCLEOTIDE SEQUENCE [MRNA]</scope>
</reference>
<sequence length="187" mass="20994">MPVDLSKWSGPLSLQEVEERPQHPLQVTYSGVALDELGQVLTPTQVKNRPTSIVWDGLDPDKLYTLVLTDPDAPSRKDPKYREWHHFLVVNMKGGNISSGTVLSDYVGSGPPKGTGLHRYVWLVYEQDGPLKCDEPVLSNRSGDHRGKFKVANFRKKYHLGTPVAGSCYQAEWDDYVPKLYELLSGK</sequence>
<protein>
    <recommendedName>
        <fullName>Phosphatidylethanolamine-binding protein 1</fullName>
        <shortName>PEBP-1</shortName>
    </recommendedName>
    <alternativeName>
        <fullName>HCNPpp</fullName>
    </alternativeName>
    <component>
        <recommendedName>
            <fullName>Hippocampal cholinergic neurostimulating peptide</fullName>
            <shortName>HCNP</shortName>
        </recommendedName>
    </component>
</protein>
<feature type="chain" id="PRO_0000276762" description="Phosphatidylethanolamine-binding protein 1">
    <location>
        <begin position="1"/>
        <end position="187"/>
    </location>
</feature>
<feature type="peptide" id="PRO_0000276763" description="Hippocampal cholinergic neurostimulating peptide">
    <location>
        <begin position="1"/>
        <end position="12"/>
    </location>
</feature>
<feature type="region of interest" description="Interaction with RAF1" evidence="1">
    <location>
        <begin position="93"/>
        <end position="134"/>
    </location>
</feature>
<feature type="modified residue" description="Phosphoserine" evidence="2">
    <location>
        <position position="6"/>
    </location>
</feature>
<feature type="modified residue" description="Phosphoserine" evidence="3">
    <location>
        <position position="13"/>
    </location>
</feature>
<feature type="modified residue" description="Phosphothreonine" evidence="2">
    <location>
        <position position="42"/>
    </location>
</feature>
<feature type="modified residue" description="Phosphoserine" evidence="2">
    <location>
        <position position="52"/>
    </location>
</feature>
<feature type="modified residue" description="Phosphoserine" evidence="2">
    <location>
        <position position="98"/>
    </location>
</feature>
<comment type="function">
    <text evidence="1">Binds ATP, opioids and phosphatidylethanolamine. Has lower affinity for phosphatidylinositol and phosphatidylcholine. Serine protease inhibitor which inhibits thrombin, neuropsin and chymotrypsin but not trypsin, tissue type plasminogen activator and elastase (By similarity). Inhibits the kinase activity of RAF1 by inhibiting its activation and by dissociating the RAF1/MEK complex and acting as a competitive inhibitor of MEK phosphorylation (By similarity).</text>
</comment>
<comment type="function">
    <text evidence="1">HCNP may be involved in the function of the presynaptic cholinergic neurons of the central nervous system. HCNP increases the production of choline acetyltransferase but not acetylcholinesterase. Seems to be mediated by a specific receptor (By similarity).</text>
</comment>
<comment type="subunit">
    <text evidence="1">Has a tendency to form dimers by disulfide cross-linking. Interacts with RAF1 and this interaction is enhanced if RAF1 is phosphorylated on residues 'Ser-338', 'Ser-339', 'Tyr-340' and 'Tyr-341'. Interacts with ALOX15; in response to IL13/interleukin-13, prevents the interaction of PEBP1 with RAF1 to activate the ERK signaling cascade (By similarity).</text>
</comment>
<comment type="subcellular location">
    <subcellularLocation>
        <location evidence="1">Cytoplasm</location>
    </subcellularLocation>
</comment>
<comment type="similarity">
    <text evidence="4">Belongs to the phosphatidylethanolamine-binding protein family.</text>
</comment>
<dbReference type="EMBL" id="AY094175">
    <property type="protein sequence ID" value="AAM22502.1"/>
    <property type="molecule type" value="mRNA"/>
</dbReference>
<dbReference type="RefSeq" id="NP_001075612.1">
    <property type="nucleotide sequence ID" value="NM_001082143.1"/>
</dbReference>
<dbReference type="SMR" id="Q8MK67"/>
<dbReference type="FunCoup" id="Q8MK67">
    <property type="interactions" value="141"/>
</dbReference>
<dbReference type="STRING" id="9986.ENSOCUP00000007249"/>
<dbReference type="MEROPS" id="I51.002"/>
<dbReference type="PaxDb" id="9986-ENSOCUP00000007249"/>
<dbReference type="GeneID" id="100008884"/>
<dbReference type="KEGG" id="ocu:100008884"/>
<dbReference type="CTD" id="5037"/>
<dbReference type="eggNOG" id="KOG3346">
    <property type="taxonomic scope" value="Eukaryota"/>
</dbReference>
<dbReference type="InParanoid" id="Q8MK67"/>
<dbReference type="OrthoDB" id="2506647at2759"/>
<dbReference type="Proteomes" id="UP000001811">
    <property type="component" value="Unplaced"/>
</dbReference>
<dbReference type="GO" id="GO:0005737">
    <property type="term" value="C:cytoplasm"/>
    <property type="evidence" value="ECO:0007669"/>
    <property type="project" value="UniProtKB-SubCell"/>
</dbReference>
<dbReference type="GO" id="GO:0005524">
    <property type="term" value="F:ATP binding"/>
    <property type="evidence" value="ECO:0007669"/>
    <property type="project" value="UniProtKB-KW"/>
</dbReference>
<dbReference type="GO" id="GO:0008289">
    <property type="term" value="F:lipid binding"/>
    <property type="evidence" value="ECO:0007669"/>
    <property type="project" value="UniProtKB-KW"/>
</dbReference>
<dbReference type="GO" id="GO:0004867">
    <property type="term" value="F:serine-type endopeptidase inhibitor activity"/>
    <property type="evidence" value="ECO:0007669"/>
    <property type="project" value="UniProtKB-KW"/>
</dbReference>
<dbReference type="GO" id="GO:0043409">
    <property type="term" value="P:negative regulation of MAPK cascade"/>
    <property type="evidence" value="ECO:0007669"/>
    <property type="project" value="TreeGrafter"/>
</dbReference>
<dbReference type="CDD" id="cd00866">
    <property type="entry name" value="PEBP_euk"/>
    <property type="match status" value="1"/>
</dbReference>
<dbReference type="FunFam" id="3.90.280.10:FF:000003">
    <property type="entry name" value="phosphatidylethanolamine-binding protein 1"/>
    <property type="match status" value="1"/>
</dbReference>
<dbReference type="Gene3D" id="3.90.280.10">
    <property type="entry name" value="PEBP-like"/>
    <property type="match status" value="1"/>
</dbReference>
<dbReference type="InterPro" id="IPR008914">
    <property type="entry name" value="PEBP"/>
</dbReference>
<dbReference type="InterPro" id="IPR036610">
    <property type="entry name" value="PEBP-like_sf"/>
</dbReference>
<dbReference type="InterPro" id="IPR035810">
    <property type="entry name" value="PEBP_euk"/>
</dbReference>
<dbReference type="InterPro" id="IPR001858">
    <property type="entry name" value="Phosphatidylethanolamine-bd_CS"/>
</dbReference>
<dbReference type="PANTHER" id="PTHR11362">
    <property type="entry name" value="PHOSPHATIDYLETHANOLAMINE-BINDING PROTEIN"/>
    <property type="match status" value="1"/>
</dbReference>
<dbReference type="PANTHER" id="PTHR11362:SF151">
    <property type="entry name" value="PHOSPHATIDYLETHANOLAMINE-BINDING PROTEIN 1"/>
    <property type="match status" value="1"/>
</dbReference>
<dbReference type="Pfam" id="PF01161">
    <property type="entry name" value="PBP"/>
    <property type="match status" value="1"/>
</dbReference>
<dbReference type="SUPFAM" id="SSF49777">
    <property type="entry name" value="PEBP-like"/>
    <property type="match status" value="1"/>
</dbReference>
<dbReference type="PROSITE" id="PS01220">
    <property type="entry name" value="PBP"/>
    <property type="match status" value="1"/>
</dbReference>
<gene>
    <name type="primary">PEBP1</name>
    <name type="synonym">PBP</name>
</gene>
<accession>Q8MK67</accession>
<name>PEBP1_RABIT</name>